<gene>
    <name type="primary">Itga7</name>
</gene>
<proteinExistence type="evidence at protein level"/>
<evidence type="ECO:0000250" key="1"/>
<evidence type="ECO:0000250" key="2">
    <source>
        <dbReference type="UniProtKB" id="P08648"/>
    </source>
</evidence>
<evidence type="ECO:0000255" key="3"/>
<evidence type="ECO:0000255" key="4">
    <source>
        <dbReference type="PROSITE-ProRule" id="PRU00803"/>
    </source>
</evidence>
<evidence type="ECO:0000256" key="5">
    <source>
        <dbReference type="SAM" id="MobiDB-lite"/>
    </source>
</evidence>
<evidence type="ECO:0000269" key="6">
    <source>
    </source>
</evidence>
<evidence type="ECO:0000269" key="7">
    <source>
    </source>
</evidence>
<evidence type="ECO:0000269" key="8">
    <source>
    </source>
</evidence>
<evidence type="ECO:0000269" key="9">
    <source>
    </source>
</evidence>
<evidence type="ECO:0000303" key="10">
    <source>
    </source>
</evidence>
<evidence type="ECO:0000305" key="11"/>
<dbReference type="EMBL" id="BC088846">
    <property type="protein sequence ID" value="AAH88846.1"/>
    <property type="molecule type" value="mRNA"/>
</dbReference>
<dbReference type="EMBL" id="X65036">
    <property type="protein sequence ID" value="CAA46170.1"/>
    <property type="molecule type" value="mRNA"/>
</dbReference>
<dbReference type="EMBL" id="X74293">
    <property type="protein sequence ID" value="CAA52346.1"/>
    <property type="molecule type" value="mRNA"/>
</dbReference>
<dbReference type="EMBL" id="X74294">
    <property type="protein sequence ID" value="CAA52347.1"/>
    <property type="molecule type" value="mRNA"/>
</dbReference>
<dbReference type="PIR" id="S38783">
    <property type="entry name" value="S38783"/>
</dbReference>
<dbReference type="PIR" id="S40148">
    <property type="entry name" value="S40148"/>
</dbReference>
<dbReference type="PIR" id="S40149">
    <property type="entry name" value="S40149"/>
</dbReference>
<dbReference type="RefSeq" id="NP_110469.1">
    <molecule id="Q63258-1"/>
    <property type="nucleotide sequence ID" value="NM_030842.2"/>
</dbReference>
<dbReference type="SMR" id="Q63258"/>
<dbReference type="BioGRID" id="249497">
    <property type="interactions" value="2"/>
</dbReference>
<dbReference type="CORUM" id="Q63258"/>
<dbReference type="FunCoup" id="Q63258">
    <property type="interactions" value="457"/>
</dbReference>
<dbReference type="IntAct" id="Q63258">
    <property type="interactions" value="1"/>
</dbReference>
<dbReference type="STRING" id="10116.ENSRNOP00000028983"/>
<dbReference type="GlyCosmos" id="Q63258">
    <property type="glycosylation" value="5 sites, No reported glycans"/>
</dbReference>
<dbReference type="GlyGen" id="Q63258">
    <property type="glycosylation" value="5 sites"/>
</dbReference>
<dbReference type="iPTMnet" id="Q63258"/>
<dbReference type="PhosphoSitePlus" id="Q63258"/>
<dbReference type="SwissPalm" id="Q63258"/>
<dbReference type="PaxDb" id="10116-ENSRNOP00000058370"/>
<dbReference type="GeneID" id="81008"/>
<dbReference type="KEGG" id="rno:81008"/>
<dbReference type="UCSC" id="RGD:71022">
    <molecule id="Q63258-1"/>
    <property type="organism name" value="rat"/>
</dbReference>
<dbReference type="AGR" id="RGD:71022"/>
<dbReference type="CTD" id="3679"/>
<dbReference type="RGD" id="71022">
    <property type="gene designation" value="Itga7"/>
</dbReference>
<dbReference type="VEuPathDB" id="HostDB:ENSRNOG00000007905"/>
<dbReference type="eggNOG" id="KOG3637">
    <property type="taxonomic scope" value="Eukaryota"/>
</dbReference>
<dbReference type="HOGENOM" id="CLU_004111_1_0_1"/>
<dbReference type="InParanoid" id="Q63258"/>
<dbReference type="OrthoDB" id="35906at9989"/>
<dbReference type="PhylomeDB" id="Q63258"/>
<dbReference type="Reactome" id="R-RNO-3000157">
    <property type="pathway name" value="Laminin interactions"/>
</dbReference>
<dbReference type="Reactome" id="R-RNO-3000178">
    <property type="pathway name" value="ECM proteoglycans"/>
</dbReference>
<dbReference type="PRO" id="PR:Q63258"/>
<dbReference type="Proteomes" id="UP000002494">
    <property type="component" value="Chromosome 7"/>
</dbReference>
<dbReference type="Bgee" id="ENSRNOG00000007905">
    <property type="expression patterns" value="Expressed in heart and 19 other cell types or tissues"/>
</dbReference>
<dbReference type="ExpressionAtlas" id="Q63258">
    <property type="expression patterns" value="baseline and differential"/>
</dbReference>
<dbReference type="GO" id="GO:0009986">
    <property type="term" value="C:cell surface"/>
    <property type="evidence" value="ECO:0000314"/>
    <property type="project" value="RGD"/>
</dbReference>
<dbReference type="GO" id="GO:0005737">
    <property type="term" value="C:cytoplasm"/>
    <property type="evidence" value="ECO:0000266"/>
    <property type="project" value="RGD"/>
</dbReference>
<dbReference type="GO" id="GO:0009897">
    <property type="term" value="C:external side of plasma membrane"/>
    <property type="evidence" value="ECO:0000318"/>
    <property type="project" value="GO_Central"/>
</dbReference>
<dbReference type="GO" id="GO:0034677">
    <property type="term" value="C:integrin alpha7-beta1 complex"/>
    <property type="evidence" value="ECO:0000266"/>
    <property type="project" value="RGD"/>
</dbReference>
<dbReference type="GO" id="GO:0008305">
    <property type="term" value="C:integrin complex"/>
    <property type="evidence" value="ECO:0000314"/>
    <property type="project" value="RGD"/>
</dbReference>
<dbReference type="GO" id="GO:0005927">
    <property type="term" value="C:muscle tendon junction"/>
    <property type="evidence" value="ECO:0000266"/>
    <property type="project" value="RGD"/>
</dbReference>
<dbReference type="GO" id="GO:0031594">
    <property type="term" value="C:neuromuscular junction"/>
    <property type="evidence" value="ECO:0000266"/>
    <property type="project" value="RGD"/>
</dbReference>
<dbReference type="GO" id="GO:0042383">
    <property type="term" value="C:sarcolemma"/>
    <property type="evidence" value="ECO:0000266"/>
    <property type="project" value="RGD"/>
</dbReference>
<dbReference type="GO" id="GO:0050839">
    <property type="term" value="F:cell adhesion molecule binding"/>
    <property type="evidence" value="ECO:0000314"/>
    <property type="project" value="RGD"/>
</dbReference>
<dbReference type="GO" id="GO:0005178">
    <property type="term" value="F:integrin binding"/>
    <property type="evidence" value="ECO:0000353"/>
    <property type="project" value="RGD"/>
</dbReference>
<dbReference type="GO" id="GO:0043236">
    <property type="term" value="F:laminin binding"/>
    <property type="evidence" value="ECO:0000314"/>
    <property type="project" value="RGD"/>
</dbReference>
<dbReference type="GO" id="GO:0046872">
    <property type="term" value="F:metal ion binding"/>
    <property type="evidence" value="ECO:0007669"/>
    <property type="project" value="UniProtKB-KW"/>
</dbReference>
<dbReference type="GO" id="GO:0044877">
    <property type="term" value="F:protein-containing complex binding"/>
    <property type="evidence" value="ECO:0000314"/>
    <property type="project" value="RGD"/>
</dbReference>
<dbReference type="GO" id="GO:0048514">
    <property type="term" value="P:blood vessel morphogenesis"/>
    <property type="evidence" value="ECO:0000266"/>
    <property type="project" value="RGD"/>
</dbReference>
<dbReference type="GO" id="GO:0007155">
    <property type="term" value="P:cell adhesion"/>
    <property type="evidence" value="ECO:0000314"/>
    <property type="project" value="RGD"/>
</dbReference>
<dbReference type="GO" id="GO:0033627">
    <property type="term" value="P:cell adhesion mediated by integrin"/>
    <property type="evidence" value="ECO:0000318"/>
    <property type="project" value="GO_Central"/>
</dbReference>
<dbReference type="GO" id="GO:0016477">
    <property type="term" value="P:cell migration"/>
    <property type="evidence" value="ECO:0000266"/>
    <property type="project" value="RGD"/>
</dbReference>
<dbReference type="GO" id="GO:0098609">
    <property type="term" value="P:cell-cell adhesion"/>
    <property type="evidence" value="ECO:0000318"/>
    <property type="project" value="GO_Central"/>
</dbReference>
<dbReference type="GO" id="GO:0035987">
    <property type="term" value="P:endodermal cell differentiation"/>
    <property type="evidence" value="ECO:0000266"/>
    <property type="project" value="RGD"/>
</dbReference>
<dbReference type="GO" id="GO:0034113">
    <property type="term" value="P:heterotypic cell-cell adhesion"/>
    <property type="evidence" value="ECO:0000266"/>
    <property type="project" value="RGD"/>
</dbReference>
<dbReference type="GO" id="GO:0007229">
    <property type="term" value="P:integrin-mediated signaling pathway"/>
    <property type="evidence" value="ECO:0000314"/>
    <property type="project" value="RGD"/>
</dbReference>
<dbReference type="GO" id="GO:0050900">
    <property type="term" value="P:leukocyte migration"/>
    <property type="evidence" value="ECO:0000318"/>
    <property type="project" value="GO_Central"/>
</dbReference>
<dbReference type="GO" id="GO:0008360">
    <property type="term" value="P:regulation of cell shape"/>
    <property type="evidence" value="ECO:0007669"/>
    <property type="project" value="UniProtKB-KW"/>
</dbReference>
<dbReference type="GO" id="GO:0007519">
    <property type="term" value="P:skeletal muscle tissue development"/>
    <property type="evidence" value="ECO:0000270"/>
    <property type="project" value="RGD"/>
</dbReference>
<dbReference type="FunFam" id="2.130.10.130:FF:000002">
    <property type="entry name" value="integrin alpha-6 isoform X2"/>
    <property type="match status" value="1"/>
</dbReference>
<dbReference type="FunFam" id="2.60.40.1510:FF:000002">
    <property type="entry name" value="integrin alpha-6 isoform X2"/>
    <property type="match status" value="1"/>
</dbReference>
<dbReference type="FunFam" id="2.60.40.1530:FF:000001">
    <property type="entry name" value="Integrin subunit alpha 7"/>
    <property type="match status" value="1"/>
</dbReference>
<dbReference type="FunFam" id="1.20.5.930:FF:000001">
    <property type="entry name" value="Integrin subunit alpha V"/>
    <property type="match status" value="1"/>
</dbReference>
<dbReference type="Gene3D" id="1.20.5.930">
    <property type="entry name" value="Bicelle-embedded integrin alpha(iib) transmembrane segment"/>
    <property type="match status" value="1"/>
</dbReference>
<dbReference type="Gene3D" id="2.130.10.130">
    <property type="entry name" value="Integrin alpha, N-terminal"/>
    <property type="match status" value="1"/>
</dbReference>
<dbReference type="Gene3D" id="2.60.40.1460">
    <property type="entry name" value="Integrin domains. Chain A, domain 2"/>
    <property type="match status" value="1"/>
</dbReference>
<dbReference type="Gene3D" id="2.60.40.1510">
    <property type="entry name" value="ntegrin, alpha v. Chain A, domain 3"/>
    <property type="match status" value="1"/>
</dbReference>
<dbReference type="Gene3D" id="2.60.40.1530">
    <property type="entry name" value="ntegrin, alpha v. Chain A, domain 4"/>
    <property type="match status" value="1"/>
</dbReference>
<dbReference type="InterPro" id="IPR013517">
    <property type="entry name" value="FG-GAP"/>
</dbReference>
<dbReference type="InterPro" id="IPR013519">
    <property type="entry name" value="Int_alpha_beta-p"/>
</dbReference>
<dbReference type="InterPro" id="IPR000413">
    <property type="entry name" value="Integrin_alpha"/>
</dbReference>
<dbReference type="InterPro" id="IPR018184">
    <property type="entry name" value="Integrin_alpha_C_CS"/>
</dbReference>
<dbReference type="InterPro" id="IPR013649">
    <property type="entry name" value="Integrin_alpha_Ig-like_1"/>
</dbReference>
<dbReference type="InterPro" id="IPR048285">
    <property type="entry name" value="Integrin_alpha_Ig-like_2"/>
</dbReference>
<dbReference type="InterPro" id="IPR048286">
    <property type="entry name" value="Integrin_alpha_Ig-like_3"/>
</dbReference>
<dbReference type="InterPro" id="IPR028994">
    <property type="entry name" value="Integrin_alpha_N"/>
</dbReference>
<dbReference type="InterPro" id="IPR032695">
    <property type="entry name" value="Integrin_dom_sf"/>
</dbReference>
<dbReference type="PANTHER" id="PTHR23220">
    <property type="entry name" value="INTEGRIN ALPHA"/>
    <property type="match status" value="1"/>
</dbReference>
<dbReference type="PANTHER" id="PTHR23220:SF90">
    <property type="entry name" value="INTEGRIN ALPHA-7"/>
    <property type="match status" value="1"/>
</dbReference>
<dbReference type="Pfam" id="PF01839">
    <property type="entry name" value="FG-GAP"/>
    <property type="match status" value="2"/>
</dbReference>
<dbReference type="Pfam" id="PF08441">
    <property type="entry name" value="Integrin_A_Ig_1"/>
    <property type="match status" value="1"/>
</dbReference>
<dbReference type="Pfam" id="PF20805">
    <property type="entry name" value="Integrin_A_Ig_2"/>
    <property type="match status" value="1"/>
</dbReference>
<dbReference type="Pfam" id="PF20806">
    <property type="entry name" value="Integrin_A_Ig_3"/>
    <property type="match status" value="1"/>
</dbReference>
<dbReference type="PRINTS" id="PR01185">
    <property type="entry name" value="INTEGRINA"/>
</dbReference>
<dbReference type="SMART" id="SM00191">
    <property type="entry name" value="Int_alpha"/>
    <property type="match status" value="5"/>
</dbReference>
<dbReference type="SUPFAM" id="SSF69318">
    <property type="entry name" value="Integrin alpha N-terminal domain"/>
    <property type="match status" value="1"/>
</dbReference>
<dbReference type="SUPFAM" id="SSF69179">
    <property type="entry name" value="Integrin domains"/>
    <property type="match status" value="3"/>
</dbReference>
<dbReference type="PROSITE" id="PS51470">
    <property type="entry name" value="FG_GAP"/>
    <property type="match status" value="7"/>
</dbReference>
<dbReference type="PROSITE" id="PS00242">
    <property type="entry name" value="INTEGRIN_ALPHA"/>
    <property type="match status" value="1"/>
</dbReference>
<accession>Q63258</accession>
<accession>Q5HZX9</accession>
<accession>Q63026</accession>
<accession>Q63027</accession>
<organism>
    <name type="scientific">Rattus norvegicus</name>
    <name type="common">Rat</name>
    <dbReference type="NCBI Taxonomy" id="10116"/>
    <lineage>
        <taxon>Eukaryota</taxon>
        <taxon>Metazoa</taxon>
        <taxon>Chordata</taxon>
        <taxon>Craniata</taxon>
        <taxon>Vertebrata</taxon>
        <taxon>Euteleostomi</taxon>
        <taxon>Mammalia</taxon>
        <taxon>Eutheria</taxon>
        <taxon>Euarchontoglires</taxon>
        <taxon>Glires</taxon>
        <taxon>Rodentia</taxon>
        <taxon>Myomorpha</taxon>
        <taxon>Muroidea</taxon>
        <taxon>Muridae</taxon>
        <taxon>Murinae</taxon>
        <taxon>Rattus</taxon>
    </lineage>
</organism>
<protein>
    <recommendedName>
        <fullName>Integrin alpha-7</fullName>
    </recommendedName>
    <alternativeName>
        <fullName>H36-alpha7</fullName>
    </alternativeName>
    <component>
        <recommendedName>
            <fullName>Integrin alpha-7 heavy chain</fullName>
        </recommendedName>
    </component>
    <component>
        <recommendedName>
            <fullName>Integrin alpha-7 light chain</fullName>
        </recommendedName>
    </component>
    <component>
        <recommendedName>
            <fullName>Integrin alpha-7 70 kDa form</fullName>
        </recommendedName>
    </component>
</protein>
<keyword id="KW-0013">ADP-ribosylation</keyword>
<keyword id="KW-0025">Alternative splicing</keyword>
<keyword id="KW-0106">Calcium</keyword>
<keyword id="KW-0130">Cell adhesion</keyword>
<keyword id="KW-0133">Cell shape</keyword>
<keyword id="KW-0165">Cleavage on pair of basic residues</keyword>
<keyword id="KW-1015">Disulfide bond</keyword>
<keyword id="KW-0325">Glycoprotein</keyword>
<keyword id="KW-0401">Integrin</keyword>
<keyword id="KW-0472">Membrane</keyword>
<keyword id="KW-0479">Metal-binding</keyword>
<keyword id="KW-0675">Receptor</keyword>
<keyword id="KW-1185">Reference proteome</keyword>
<keyword id="KW-0677">Repeat</keyword>
<keyword id="KW-0732">Signal</keyword>
<keyword id="KW-0812">Transmembrane</keyword>
<keyword id="KW-1133">Transmembrane helix</keyword>
<feature type="signal peptide" evidence="1">
    <location>
        <begin position="1"/>
        <end position="33"/>
    </location>
</feature>
<feature type="chain" id="PRO_0000293124" description="Integrin alpha-7">
    <location>
        <begin position="34"/>
        <end position="1135"/>
    </location>
</feature>
<feature type="chain" id="PRO_0000016273" description="Integrin alpha-7 heavy chain" evidence="3">
    <location>
        <begin position="34"/>
        <end position="910"/>
    </location>
</feature>
<feature type="chain" id="PRO_0000398834" description="Integrin alpha-7 70 kDa form">
    <location>
        <begin position="604"/>
        <end position="1135"/>
    </location>
</feature>
<feature type="chain" id="PRO_0000016274" description="Integrin alpha-7 light chain" evidence="3">
    <location>
        <begin position="914"/>
        <end position="1135"/>
    </location>
</feature>
<feature type="topological domain" description="Extracellular" evidence="3">
    <location>
        <begin position="34"/>
        <end position="1036"/>
    </location>
</feature>
<feature type="transmembrane region" description="Helical" evidence="3">
    <location>
        <begin position="1037"/>
        <end position="1057"/>
    </location>
</feature>
<feature type="topological domain" description="Cytoplasmic" evidence="3">
    <location>
        <begin position="1058"/>
        <end position="1135"/>
    </location>
</feature>
<feature type="repeat" description="FG-GAP 1" evidence="4">
    <location>
        <begin position="38"/>
        <end position="103"/>
    </location>
</feature>
<feature type="repeat" description="FG-GAP 2" evidence="4">
    <location>
        <begin position="110"/>
        <end position="165"/>
    </location>
</feature>
<feature type="repeat" description="FG-GAP 3" evidence="4">
    <location>
        <begin position="185"/>
        <end position="238"/>
    </location>
</feature>
<feature type="repeat" description="FG-GAP 4" evidence="4">
    <location>
        <begin position="248"/>
        <end position="305"/>
    </location>
</feature>
<feature type="repeat" description="FG-GAP 5" evidence="4">
    <location>
        <begin position="306"/>
        <end position="367"/>
    </location>
</feature>
<feature type="repeat" description="FG-GAP 6" evidence="4">
    <location>
        <begin position="368"/>
        <end position="423"/>
    </location>
</feature>
<feature type="repeat" description="FG-GAP 7" evidence="4">
    <location>
        <begin position="427"/>
        <end position="486"/>
    </location>
</feature>
<feature type="repeat" description="1">
    <location>
        <begin position="1111"/>
        <end position="1114"/>
    </location>
</feature>
<feature type="repeat" description="2">
    <location>
        <begin position="1119"/>
        <end position="1122"/>
    </location>
</feature>
<feature type="repeat" description="3">
    <location>
        <begin position="1127"/>
        <end position="1130"/>
    </location>
</feature>
<feature type="region of interest" description="Disordered" evidence="5">
    <location>
        <begin position="905"/>
        <end position="933"/>
    </location>
</feature>
<feature type="region of interest" description="3 X 4 AA repeats of D-X-H-P">
    <location>
        <begin position="1111"/>
        <end position="1130"/>
    </location>
</feature>
<feature type="short sequence motif" description="GFFKR motif">
    <location>
        <begin position="1061"/>
        <end position="1065"/>
    </location>
</feature>
<feature type="compositionally biased region" description="Basic and acidic residues" evidence="5">
    <location>
        <begin position="905"/>
        <end position="916"/>
    </location>
</feature>
<feature type="binding site" evidence="2">
    <location>
        <position position="328"/>
    </location>
    <ligand>
        <name>Ca(2+)</name>
        <dbReference type="ChEBI" id="CHEBI:29108"/>
        <label>1</label>
    </ligand>
</feature>
<feature type="binding site" evidence="2">
    <location>
        <position position="330"/>
    </location>
    <ligand>
        <name>Ca(2+)</name>
        <dbReference type="ChEBI" id="CHEBI:29108"/>
        <label>1</label>
    </ligand>
</feature>
<feature type="binding site" evidence="2">
    <location>
        <position position="332"/>
    </location>
    <ligand>
        <name>Ca(2+)</name>
        <dbReference type="ChEBI" id="CHEBI:29108"/>
        <label>1</label>
    </ligand>
</feature>
<feature type="binding site" evidence="2">
    <location>
        <position position="336"/>
    </location>
    <ligand>
        <name>Ca(2+)</name>
        <dbReference type="ChEBI" id="CHEBI:29108"/>
        <label>1</label>
    </ligand>
</feature>
<feature type="binding site" evidence="2">
    <location>
        <position position="390"/>
    </location>
    <ligand>
        <name>Ca(2+)</name>
        <dbReference type="ChEBI" id="CHEBI:29108"/>
        <label>2</label>
    </ligand>
</feature>
<feature type="binding site" evidence="2">
    <location>
        <position position="392"/>
    </location>
    <ligand>
        <name>Ca(2+)</name>
        <dbReference type="ChEBI" id="CHEBI:29108"/>
        <label>2</label>
    </ligand>
</feature>
<feature type="binding site" evidence="2">
    <location>
        <position position="394"/>
    </location>
    <ligand>
        <name>Ca(2+)</name>
        <dbReference type="ChEBI" id="CHEBI:29108"/>
        <label>2</label>
    </ligand>
</feature>
<feature type="binding site" evidence="2">
    <location>
        <position position="398"/>
    </location>
    <ligand>
        <name>Ca(2+)</name>
        <dbReference type="ChEBI" id="CHEBI:29108"/>
        <label>2</label>
    </ligand>
</feature>
<feature type="binding site" evidence="2">
    <location>
        <position position="448"/>
    </location>
    <ligand>
        <name>Ca(2+)</name>
        <dbReference type="ChEBI" id="CHEBI:29108"/>
        <label>3</label>
    </ligand>
</feature>
<feature type="binding site" evidence="2">
    <location>
        <position position="450"/>
    </location>
    <ligand>
        <name>Ca(2+)</name>
        <dbReference type="ChEBI" id="CHEBI:29108"/>
        <label>3</label>
    </ligand>
</feature>
<feature type="binding site" evidence="2">
    <location>
        <position position="452"/>
    </location>
    <ligand>
        <name>Ca(2+)</name>
        <dbReference type="ChEBI" id="CHEBI:29108"/>
        <label>3</label>
    </ligand>
</feature>
<feature type="binding site" evidence="2">
    <location>
        <position position="454"/>
    </location>
    <ligand>
        <name>Ca(2+)</name>
        <dbReference type="ChEBI" id="CHEBI:29108"/>
        <label>3</label>
    </ligand>
</feature>
<feature type="binding site" evidence="2">
    <location>
        <position position="456"/>
    </location>
    <ligand>
        <name>Ca(2+)</name>
        <dbReference type="ChEBI" id="CHEBI:29108"/>
        <label>3</label>
    </ligand>
</feature>
<feature type="site" description="Cleavage; by urokinase">
    <location>
        <begin position="603"/>
        <end position="604"/>
    </location>
</feature>
<feature type="glycosylation site" description="N-linked (GlcNAc...) asparagine" evidence="3">
    <location>
        <position position="86"/>
    </location>
</feature>
<feature type="glycosylation site" description="N-linked (GlcNAc...) asparagine" evidence="3">
    <location>
        <position position="741"/>
    </location>
</feature>
<feature type="glycosylation site" description="N-linked (GlcNAc...) asparagine" evidence="3">
    <location>
        <position position="943"/>
    </location>
</feature>
<feature type="glycosylation site" description="N-linked (GlcNAc...) asparagine" evidence="3">
    <location>
        <position position="979"/>
    </location>
</feature>
<feature type="glycosylation site" description="N-linked (GlcNAc...) asparagine" evidence="3">
    <location>
        <position position="999"/>
    </location>
</feature>
<feature type="disulfide bond" evidence="1">
    <location>
        <begin position="94"/>
        <end position="103"/>
    </location>
</feature>
<feature type="disulfide bond" evidence="1">
    <location>
        <begin position="140"/>
        <end position="163"/>
    </location>
</feature>
<feature type="disulfide bond" evidence="1">
    <location>
        <begin position="184"/>
        <end position="197"/>
    </location>
</feature>
<feature type="disulfide bond" evidence="1">
    <location>
        <begin position="495"/>
        <end position="502"/>
    </location>
</feature>
<feature type="disulfide bond" evidence="1">
    <location>
        <begin position="508"/>
        <end position="571"/>
    </location>
</feature>
<feature type="disulfide bond" evidence="1">
    <location>
        <begin position="637"/>
        <end position="643"/>
    </location>
</feature>
<feature type="disulfide bond" evidence="1">
    <location>
        <begin position="736"/>
        <end position="747"/>
    </location>
</feature>
<feature type="disulfide bond" description="Interchain (between heavy and light chains)" evidence="1">
    <location>
        <begin position="894"/>
        <end position="948"/>
    </location>
</feature>
<feature type="disulfide bond" evidence="1">
    <location>
        <begin position="955"/>
        <end position="960"/>
    </location>
</feature>
<feature type="splice variant" id="VSP_002734" description="In isoform Alpha-7X1A." evidence="10">
    <original>LGFFKRAKHPEATVPQYHAVKILREDRQQFKEEKTGTIQRSNWGNSQWEGSDAHPILAADWHPELGPDGHPVSVTA</original>
    <variation>CGFFRRNSPSSSFPANYHRAHLAVQPSAMEAGGPGTVGWDSSSGRSTLRPLYPSTTQ</variation>
    <location>
        <begin position="1060"/>
        <end position="1135"/>
    </location>
</feature>
<feature type="splice variant" id="VSP_002735" description="In isoform Alpha-7X1C." evidence="10">
    <original>RAKHPEATVPQYHAVKILREDRQQFKEEKTGTIQRSNWGNSQWEGSDAHPILAADWHPELGPDGHPVSVTA</original>
    <variation>CAVPAQRILSIY</variation>
    <location>
        <begin position="1065"/>
        <end position="1135"/>
    </location>
</feature>
<feature type="mutagenesis site" description="Abolishes cleavage by urokinase." evidence="7">
    <original>R</original>
    <variation>G</variation>
    <location>
        <position position="603"/>
    </location>
</feature>
<feature type="sequence conflict" description="In Ref. 2; CAA46170." evidence="11" ref="2">
    <original>ALPGQQANRTGGLFACP</original>
    <variation>DSYPDSRQIAHGRPLCLS</variation>
    <location>
        <begin position="79"/>
        <end position="95"/>
    </location>
</feature>
<feature type="sequence conflict" description="In Ref. 2; CAA46170." evidence="11" ref="2">
    <original>SQGA</original>
    <variation>PRES</variation>
    <location>
        <begin position="130"/>
        <end position="133"/>
    </location>
</feature>
<feature type="sequence conflict" description="In Ref. 2; CAA46170." evidence="11" ref="2">
    <original>R</original>
    <variation>E</variation>
    <location>
        <position position="149"/>
    </location>
</feature>
<feature type="sequence conflict" description="In Ref. 2; CAA46170." evidence="11" ref="2">
    <original>LLFVTNID</original>
    <variation>TARVELCAQG</variation>
    <location>
        <begin position="225"/>
        <end position="232"/>
    </location>
</feature>
<feature type="sequence conflict" description="In Ref. 2; CAA46170." evidence="11" ref="2">
    <original>PDQLVYKTLDPADRLTGPAGDLTL</original>
    <variation>LAQVDDGPYEAGGEKDQDPRPSPVPA</variation>
    <location>
        <begin position="236"/>
        <end position="259"/>
    </location>
</feature>
<feature type="sequence conflict" description="In Ref. 2; CAA46170." evidence="11" ref="2">
    <original>D</original>
    <variation>H</variation>
    <location>
        <position position="378"/>
    </location>
</feature>
<feature type="sequence conflict" description="In Ref. 2; CAA46170." evidence="11" ref="2">
    <original>VFQLQENV</original>
    <variation>CVPAAGKR</variation>
    <location>
        <begin position="575"/>
        <end position="582"/>
    </location>
</feature>
<feature type="sequence conflict" description="In Ref. 2; CAA46170." evidence="11" ref="2">
    <original>P</original>
    <variation>G</variation>
    <location>
        <position position="616"/>
    </location>
</feature>
<feature type="sequence conflict" description="In Ref. 2; CAA46170." evidence="11" ref="2">
    <original>A</original>
    <variation>V</variation>
    <location>
        <position position="650"/>
    </location>
</feature>
<feature type="sequence conflict" description="In Ref. 2; CAA46170." evidence="11" ref="2">
    <original>LS</original>
    <variation>HG</variation>
    <location>
        <begin position="678"/>
        <end position="679"/>
    </location>
</feature>
<feature type="sequence conflict" description="In Ref. 2; CAA46170." evidence="11" ref="2">
    <original>RDV</original>
    <variation>WDE</variation>
    <location>
        <begin position="833"/>
        <end position="835"/>
    </location>
</feature>
<feature type="sequence conflict" description="In Ref. 2; CAA46170." evidence="11" ref="2">
    <original>AQ</original>
    <variation>P</variation>
    <location>
        <begin position="949"/>
        <end position="950"/>
    </location>
</feature>
<feature type="sequence conflict" description="In Ref. 3; CAA52346/CAA52347." evidence="11" ref="3">
    <original>V</original>
    <variation>G</variation>
    <location>
        <position position="996"/>
    </location>
</feature>
<name>ITA7_RAT</name>
<reference key="1">
    <citation type="journal article" date="2004" name="Genome Res.">
        <title>The status, quality, and expansion of the NIH full-length cDNA project: the Mammalian Gene Collection (MGC).</title>
        <authorList>
            <consortium name="The MGC Project Team"/>
        </authorList>
    </citation>
    <scope>NUCLEOTIDE SEQUENCE [LARGE SCALE MRNA] (ISOFORM ALPHA-7X1B)</scope>
    <source>
        <tissue>Brain</tissue>
    </source>
</reference>
<reference key="2">
    <citation type="journal article" date="1992" name="J. Cell Biol.">
        <title>H36-alpha 7 is a novel integrin alpha chain that is developmentally regulated during skeletal myogenesis.</title>
        <authorList>
            <person name="Song W.K."/>
            <person name="Wang W."/>
            <person name="Foster R.F."/>
            <person name="Bielser D.A."/>
            <person name="Kaufman S.J."/>
        </authorList>
    </citation>
    <scope>NUCLEOTIDE SEQUENCE [MRNA] OF 34-1135 (ISOFORM ALPHA-7X1B)</scope>
    <source>
        <tissue>Skeletal muscle</tissue>
    </source>
</reference>
<reference key="3">
    <citation type="journal article" date="1993" name="J. Cell Sci.">
        <title>Expression of alpha 7 integrin cytoplasmic domains during skeletal muscle development: alternate forms, conformational change, and homologies with serine/threonine kinases and tyrosine phosphatases.</title>
        <authorList>
            <person name="Song W.K."/>
            <person name="Wang W."/>
            <person name="Sato H."/>
            <person name="Bielser D.A."/>
            <person name="Kaufman S.J."/>
        </authorList>
    </citation>
    <scope>NUCLEOTIDE SEQUENCE [MRNA] OF 969-1135 (ISOFORMS ALPHA-7X1A AND ALPHA-7X1C)</scope>
    <source>
        <tissue>Skeletal muscle</tissue>
    </source>
</reference>
<reference key="4">
    <citation type="journal article" date="1996" name="Dev. Biol.">
        <title>Synaptic integrins in developing, adult, and mutant muscle: selective association of alpha1, alpha7A, and alpha7B integrins with the neuromuscular junction.</title>
        <authorList>
            <person name="Martin P.T."/>
            <person name="Kaufman S.J."/>
            <person name="Kramer R.H."/>
            <person name="Sanes J.R."/>
        </authorList>
    </citation>
    <scope>TISSUE SPECIFICITY</scope>
</reference>
<reference key="5">
    <citation type="journal article" date="2007" name="Glia">
        <title>Alpha7beta1 integrin is a receptor for laminin-2 on Schwann cells.</title>
        <authorList>
            <person name="Chernousov M.A."/>
            <person name="Kaufman S.J."/>
            <person name="Stahl R.C."/>
            <person name="Rothblum K."/>
            <person name="Carey D.J."/>
        </authorList>
    </citation>
    <scope>FUNCTION</scope>
</reference>
<reference key="6">
    <citation type="journal article" date="2008" name="J. Biol. Chem.">
        <title>Genetically determined proteolytic cleavage modulates alpha7beta1 integrin function.</title>
        <authorList>
            <person name="Liu J."/>
            <person name="Gurpur P.B."/>
            <person name="Kaufman S.J."/>
        </authorList>
    </citation>
    <scope>CLEAVAGE BY UROKINASE</scope>
    <scope>MUTAGENESIS OF ARG-603</scope>
</reference>
<reference key="7">
    <citation type="journal article" date="2010" name="Circ. Res.">
        <title>Cartilage oligomeric matrix protein maintains the contractile phenotype of vascular smooth muscle cells by interacting with alpha(7)beta(1) integrin.</title>
        <authorList>
            <person name="Wang L."/>
            <person name="Zheng J."/>
            <person name="Du Y."/>
            <person name="Huang Y."/>
            <person name="Li J."/>
            <person name="Liu B."/>
            <person name="Liu C.J."/>
            <person name="Zhu Y."/>
            <person name="Gao Y."/>
            <person name="Xu Q."/>
            <person name="Kong W."/>
            <person name="Wang X."/>
        </authorList>
    </citation>
    <scope>FUNCTION</scope>
    <scope>INTERACTION WITH COMP</scope>
</reference>
<comment type="function">
    <text evidence="1 6 8">Integrin alpha-7/beta-1 is the primary laminin receptor on skeletal myoblasts and adult myofibers. During myogenic differentiation, it may induce changes in the shape and mobility of myoblasts, and facilitate their localization at laminin-rich sites of secondary fiber formation. Involved in the maintenance of the myofibers cytoarchitecture as well as for their anchorage, viability and functional integrity. Required to promote contractile phenotype acquisition in differentiated airway smooth muscle (ASM) cells (By similarity). Acts as a Schwann cell receptor for laminin-2. Acts as a receptor of COMP and mediates its effect on vascular smooth muscle cells (VSMCs) maturation.</text>
</comment>
<comment type="subunit">
    <text evidence="1 8">Interacts (via C-terminus intracellular tail region) with CIB1; the interaction is stabilized/increased in a calcium- and magnesium-dependent manner (By similarity). Heterodimer of an alpha and a beta subunit. The alpha subunit is composed of a heavy and a light chain linked by a disulfide bond. Alpha-7 associates with beta-1. Interacts with COMP.</text>
</comment>
<comment type="subcellular location">
    <subcellularLocation>
        <location>Membrane</location>
        <topology>Single-pass type I membrane protein</topology>
    </subcellularLocation>
</comment>
<comment type="alternative products">
    <event type="alternative splicing"/>
    <isoform>
        <id>Q63258-1</id>
        <name>Alpha-7X1B</name>
        <sequence type="displayed"/>
    </isoform>
    <isoform>
        <id>Q63258-2</id>
        <name>Alpha-7X1A</name>
        <sequence type="described" ref="VSP_002734"/>
    </isoform>
    <isoform>
        <id>Q63258-3</id>
        <name>Alpha-7X1C</name>
        <sequence type="described" ref="VSP_002735"/>
    </isoform>
    <text>Additional isoforms seem to exist.</text>
</comment>
<comment type="tissue specificity">
    <text evidence="9">Expressed in skeletal and cardiac muscle. Expressed in replicating myoblasts. In differentiated muscle fibers localizes between fibers and the surrounding matrix. Isoform Alpha-7X1A and isoform Alpha-7X1B are expressed at myotendinous and neuromuscular junctions; isoform Alpha-7X1C is expressed at neuromuscular junctions and at extrasynaptic sites.</text>
</comment>
<comment type="developmental stage">
    <text>Isoforms are developmentally regulated during the formation of skeletal muscle. Isoform Alpha-7X1A and isoform Alpha-7X1C are induced upon terminal myogenic differentiation; isoform Alpha-7X1B is present earlier in replicating cells and diminishes upon differentiation.</text>
</comment>
<comment type="PTM">
    <text evidence="1">ADP-ribosylated on at least two sites of the extracellular domain in skeletal myotubes.</text>
</comment>
<comment type="PTM">
    <text evidence="7">A 70 kDa form is created by proteolytic cleavage. Cleavage is elevated during myogenic differentiation and the cleaved form enhances cell adhesion and spreading on laminin.</text>
</comment>
<comment type="similarity">
    <text evidence="11">Belongs to the integrin alpha chain family.</text>
</comment>
<sequence length="1135" mass="124194">MARIPRCDFLGLPGICYLLSFLLAGLLLPRASAFNLDVMGAIRKEGEPGSLFGFSVALHRQLQPRPQSWLLVGAPQALALPGQQANRTGGLFACPLSLEETDCYRVDIDRGANVQKESKENQWLGVSVRSQGAGGKVVTCAHRYESRQRVDQVLETRDVIGRCFVLSQDLAIRDELDGGEWKFCEGRPQGHEQFGFCQQGTAATFSPDSHYLIFGAPGTYNWKGLLFVTNIDSSDPDQLVYKTLDPADRLTGPAGDLTLNSYLGFSIDSGKGLMRSEELSFVAGAPRANHKGAVVILRKDSASRLIPEVVLSGERLTSGFGYSLAVTDLNSDGWADLIVGAPYFFERQEELGGAVYVYMNQGGHWADISPLRLCGSPDSMFGISLAVLGDLNQDGFPDIAVGAPFDGDGKVFIYHGSSLGVVTKPSQVLEGEAVGIKSFGYSLSGGLDVDGNHYPDLLVGSLADTAALFRARPVLHVSQEIFIDPRAIDLEQPNCADGRLVCVHVKVCFSYVAVPSSYSPIVVLDYVLDGDTDRRLRGQAPRVTFPGRGPDDLKHQSSGTVSLKHQHDRVCGDTVFQLQENVKDKLRAIVVTLSYGLQTPRLRRQAPDQGLPLVAPILNAHQPSTQRTEIHFLKQGCGDDKICQSNLQLAQAQFCSRISDTEFQALPMDLDGTALFALSGQPFIGLELTVTNLPSDPARPQADGDDAHEAQLLATLPASLRYSGVRTLDSVEKPLCLSNENASHVECELGNPMKRGTQVTFYLILSTSGITIETTELKVELLLATISEQDLHPVSVRAHVFIELPLSISGVATPQQLFFSGKVKGESAMRSERDVGSKVKYEVTVSNQGQSLNTLGSAFLNIMWPHEIANGKWLLYPMRVELEGGQGPEKKGICSPRPNILHLDVDSRDRRRRELGQPEPQEPPEKVEPSTSWWPVSSAEKRNVTLDCAQGTAKCVVFSCPLYSFDRAAVLHVWGRLWNSTFLEEYMSVKSLEVIVRANITVKSSIKNLLLRDASTVIPVMVYLDPVAVVAEGVPWWVILLAVLAGLLVLALLVLLLWKLGFFKRAKHPEATVPQYHAVKILREDRQQFKEEKTGTIQRSNWGNSQWEGSDAHPILAADWHPELGPDGHPVSVTA</sequence>